<organism>
    <name type="scientific">Rattus norvegicus</name>
    <name type="common">Rat</name>
    <dbReference type="NCBI Taxonomy" id="10116"/>
    <lineage>
        <taxon>Eukaryota</taxon>
        <taxon>Metazoa</taxon>
        <taxon>Chordata</taxon>
        <taxon>Craniata</taxon>
        <taxon>Vertebrata</taxon>
        <taxon>Euteleostomi</taxon>
        <taxon>Mammalia</taxon>
        <taxon>Eutheria</taxon>
        <taxon>Euarchontoglires</taxon>
        <taxon>Glires</taxon>
        <taxon>Rodentia</taxon>
        <taxon>Myomorpha</taxon>
        <taxon>Muroidea</taxon>
        <taxon>Muridae</taxon>
        <taxon>Murinae</taxon>
        <taxon>Rattus</taxon>
    </lineage>
</organism>
<reference key="1">
    <citation type="submission" date="2007-10" db="EMBL/GenBank/DDBJ databases">
        <title>Structure, localization, and functional diversity of serinc family revealed by two novel subtypes, serinc3 and serinc4.</title>
        <authorList>
            <person name="Ingi T."/>
            <person name="Hayakawa M."/>
            <person name="Ohmori N."/>
        </authorList>
    </citation>
    <scope>NUCLEOTIDE SEQUENCE [MRNA] (ISOFORM 2)</scope>
    <source>
        <strain>Sprague-Dawley</strain>
        <tissue>Brain</tissue>
    </source>
</reference>
<reference key="2">
    <citation type="journal article" date="2004" name="Nature">
        <title>Genome sequence of the Brown Norway rat yields insights into mammalian evolution.</title>
        <authorList>
            <person name="Gibbs R.A."/>
            <person name="Weinstock G.M."/>
            <person name="Metzker M.L."/>
            <person name="Muzny D.M."/>
            <person name="Sodergren E.J."/>
            <person name="Scherer S."/>
            <person name="Scott G."/>
            <person name="Steffen D."/>
            <person name="Worley K.C."/>
            <person name="Burch P.E."/>
            <person name="Okwuonu G."/>
            <person name="Hines S."/>
            <person name="Lewis L."/>
            <person name="Deramo C."/>
            <person name="Delgado O."/>
            <person name="Dugan-Rocha S."/>
            <person name="Miner G."/>
            <person name="Morgan M."/>
            <person name="Hawes A."/>
            <person name="Gill R."/>
            <person name="Holt R.A."/>
            <person name="Adams M.D."/>
            <person name="Amanatides P.G."/>
            <person name="Baden-Tillson H."/>
            <person name="Barnstead M."/>
            <person name="Chin S."/>
            <person name="Evans C.A."/>
            <person name="Ferriera S."/>
            <person name="Fosler C."/>
            <person name="Glodek A."/>
            <person name="Gu Z."/>
            <person name="Jennings D."/>
            <person name="Kraft C.L."/>
            <person name="Nguyen T."/>
            <person name="Pfannkoch C.M."/>
            <person name="Sitter C."/>
            <person name="Sutton G.G."/>
            <person name="Venter J.C."/>
            <person name="Woodage T."/>
            <person name="Smith D."/>
            <person name="Lee H.-M."/>
            <person name="Gustafson E."/>
            <person name="Cahill P."/>
            <person name="Kana A."/>
            <person name="Doucette-Stamm L."/>
            <person name="Weinstock K."/>
            <person name="Fechtel K."/>
            <person name="Weiss R.B."/>
            <person name="Dunn D.M."/>
            <person name="Green E.D."/>
            <person name="Blakesley R.W."/>
            <person name="Bouffard G.G."/>
            <person name="De Jong P.J."/>
            <person name="Osoegawa K."/>
            <person name="Zhu B."/>
            <person name="Marra M."/>
            <person name="Schein J."/>
            <person name="Bosdet I."/>
            <person name="Fjell C."/>
            <person name="Jones S."/>
            <person name="Krzywinski M."/>
            <person name="Mathewson C."/>
            <person name="Siddiqui A."/>
            <person name="Wye N."/>
            <person name="McPherson J."/>
            <person name="Zhao S."/>
            <person name="Fraser C.M."/>
            <person name="Shetty J."/>
            <person name="Shatsman S."/>
            <person name="Geer K."/>
            <person name="Chen Y."/>
            <person name="Abramzon S."/>
            <person name="Nierman W.C."/>
            <person name="Havlak P.H."/>
            <person name="Chen R."/>
            <person name="Durbin K.J."/>
            <person name="Egan A."/>
            <person name="Ren Y."/>
            <person name="Song X.-Z."/>
            <person name="Li B."/>
            <person name="Liu Y."/>
            <person name="Qin X."/>
            <person name="Cawley S."/>
            <person name="Cooney A.J."/>
            <person name="D'Souza L.M."/>
            <person name="Martin K."/>
            <person name="Wu J.Q."/>
            <person name="Gonzalez-Garay M.L."/>
            <person name="Jackson A.R."/>
            <person name="Kalafus K.J."/>
            <person name="McLeod M.P."/>
            <person name="Milosavljevic A."/>
            <person name="Virk D."/>
            <person name="Volkov A."/>
            <person name="Wheeler D.A."/>
            <person name="Zhang Z."/>
            <person name="Bailey J.A."/>
            <person name="Eichler E.E."/>
            <person name="Tuzun E."/>
            <person name="Birney E."/>
            <person name="Mongin E."/>
            <person name="Ureta-Vidal A."/>
            <person name="Woodwark C."/>
            <person name="Zdobnov E."/>
            <person name="Bork P."/>
            <person name="Suyama M."/>
            <person name="Torrents D."/>
            <person name="Alexandersson M."/>
            <person name="Trask B.J."/>
            <person name="Young J.M."/>
            <person name="Huang H."/>
            <person name="Wang H."/>
            <person name="Xing H."/>
            <person name="Daniels S."/>
            <person name="Gietzen D."/>
            <person name="Schmidt J."/>
            <person name="Stevens K."/>
            <person name="Vitt U."/>
            <person name="Wingrove J."/>
            <person name="Camara F."/>
            <person name="Mar Alba M."/>
            <person name="Abril J.F."/>
            <person name="Guigo R."/>
            <person name="Smit A."/>
            <person name="Dubchak I."/>
            <person name="Rubin E.M."/>
            <person name="Couronne O."/>
            <person name="Poliakov A."/>
            <person name="Huebner N."/>
            <person name="Ganten D."/>
            <person name="Goesele C."/>
            <person name="Hummel O."/>
            <person name="Kreitler T."/>
            <person name="Lee Y.-A."/>
            <person name="Monti J."/>
            <person name="Schulz H."/>
            <person name="Zimdahl H."/>
            <person name="Himmelbauer H."/>
            <person name="Lehrach H."/>
            <person name="Jacob H.J."/>
            <person name="Bromberg S."/>
            <person name="Gullings-Handley J."/>
            <person name="Jensen-Seaman M.I."/>
            <person name="Kwitek A.E."/>
            <person name="Lazar J."/>
            <person name="Pasko D."/>
            <person name="Tonellato P.J."/>
            <person name="Twigger S."/>
            <person name="Ponting C.P."/>
            <person name="Duarte J.M."/>
            <person name="Rice S."/>
            <person name="Goodstadt L."/>
            <person name="Beatson S.A."/>
            <person name="Emes R.D."/>
            <person name="Winter E.E."/>
            <person name="Webber C."/>
            <person name="Brandt P."/>
            <person name="Nyakatura G."/>
            <person name="Adetobi M."/>
            <person name="Chiaromonte F."/>
            <person name="Elnitski L."/>
            <person name="Eswara P."/>
            <person name="Hardison R.C."/>
            <person name="Hou M."/>
            <person name="Kolbe D."/>
            <person name="Makova K."/>
            <person name="Miller W."/>
            <person name="Nekrutenko A."/>
            <person name="Riemer C."/>
            <person name="Schwartz S."/>
            <person name="Taylor J."/>
            <person name="Yang S."/>
            <person name="Zhang Y."/>
            <person name="Lindpaintner K."/>
            <person name="Andrews T.D."/>
            <person name="Caccamo M."/>
            <person name="Clamp M."/>
            <person name="Clarke L."/>
            <person name="Curwen V."/>
            <person name="Durbin R.M."/>
            <person name="Eyras E."/>
            <person name="Searle S.M."/>
            <person name="Cooper G.M."/>
            <person name="Batzoglou S."/>
            <person name="Brudno M."/>
            <person name="Sidow A."/>
            <person name="Stone E.A."/>
            <person name="Payseur B.A."/>
            <person name="Bourque G."/>
            <person name="Lopez-Otin C."/>
            <person name="Puente X.S."/>
            <person name="Chakrabarti K."/>
            <person name="Chatterji S."/>
            <person name="Dewey C."/>
            <person name="Pachter L."/>
            <person name="Bray N."/>
            <person name="Yap V.B."/>
            <person name="Caspi A."/>
            <person name="Tesler G."/>
            <person name="Pevzner P.A."/>
            <person name="Haussler D."/>
            <person name="Roskin K.M."/>
            <person name="Baertsch R."/>
            <person name="Clawson H."/>
            <person name="Furey T.S."/>
            <person name="Hinrichs A.S."/>
            <person name="Karolchik D."/>
            <person name="Kent W.J."/>
            <person name="Rosenbloom K.R."/>
            <person name="Trumbower H."/>
            <person name="Weirauch M."/>
            <person name="Cooper D.N."/>
            <person name="Stenson P.D."/>
            <person name="Ma B."/>
            <person name="Brent M."/>
            <person name="Arumugam M."/>
            <person name="Shteynberg D."/>
            <person name="Copley R.R."/>
            <person name="Taylor M.S."/>
            <person name="Riethman H."/>
            <person name="Mudunuri U."/>
            <person name="Peterson J."/>
            <person name="Guyer M."/>
            <person name="Felsenfeld A."/>
            <person name="Old S."/>
            <person name="Mockrin S."/>
            <person name="Collins F.S."/>
        </authorList>
    </citation>
    <scope>NUCLEOTIDE SEQUENCE [LARGE SCALE GENOMIC DNA]</scope>
    <source>
        <strain>Brown Norway</strain>
    </source>
</reference>
<protein>
    <recommendedName>
        <fullName>Serine incorporator 4</fullName>
    </recommendedName>
</protein>
<feature type="chain" id="PRO_0000333873" description="Serine incorporator 4">
    <location>
        <begin position="1"/>
        <end position="492"/>
    </location>
</feature>
<feature type="transmembrane region" description="Helical" evidence="2">
    <location>
        <begin position="58"/>
        <end position="78"/>
    </location>
</feature>
<feature type="transmembrane region" description="Helical" evidence="2">
    <location>
        <begin position="113"/>
        <end position="133"/>
    </location>
</feature>
<feature type="transmembrane region" description="Helical" evidence="2">
    <location>
        <begin position="148"/>
        <end position="168"/>
    </location>
</feature>
<feature type="transmembrane region" description="Helical" evidence="2">
    <location>
        <begin position="179"/>
        <end position="199"/>
    </location>
</feature>
<feature type="transmembrane region" description="Helical" evidence="2">
    <location>
        <begin position="217"/>
        <end position="237"/>
    </location>
</feature>
<feature type="transmembrane region" description="Helical" evidence="2">
    <location>
        <begin position="254"/>
        <end position="274"/>
    </location>
</feature>
<feature type="transmembrane region" description="Helical" evidence="2">
    <location>
        <begin position="281"/>
        <end position="301"/>
    </location>
</feature>
<feature type="transmembrane region" description="Helical" evidence="2">
    <location>
        <begin position="330"/>
        <end position="350"/>
    </location>
</feature>
<feature type="transmembrane region" description="Helical" evidence="2">
    <location>
        <begin position="421"/>
        <end position="441"/>
    </location>
</feature>
<feature type="transmembrane region" description="Helical" evidence="2">
    <location>
        <begin position="464"/>
        <end position="484"/>
    </location>
</feature>
<feature type="splice variant" id="VSP_033586" description="In isoform 2." evidence="3">
    <location>
        <begin position="1"/>
        <end position="229"/>
    </location>
</feature>
<feature type="sequence conflict" description="In Ref. 1; ABW95046." evidence="4" ref="1">
    <original>K</original>
    <variation>R</variation>
    <location>
        <position position="454"/>
    </location>
</feature>
<feature type="sequence conflict" description="In Ref. 1; ABW95046." evidence="4" ref="1">
    <original>L</original>
    <variation>P</variation>
    <location>
        <position position="482"/>
    </location>
</feature>
<sequence length="492" mass="54011">MGAKDITGRSTTQGFAQQHGGVSDVVVKTPFYQVSCCGPVSWTSGCHSLTESTCSRLFYILLHMGASAICCLLLSKTVVERVWGKAHGIQMPSVLCAHLFGNSDCPVLSGSGAVYRVCAGTATFHLLQAVLLVRLHSPTSPRAQLHNSFWSLKLLFLLGLCTAAFCIPDEHLFPAWHYIGICGGFTFILLQLVLITAFAQSWNKNWQTGAAQDCSWFLGVLLATLGFYSMAGVGAVLLFHHYTHPDGCLLNKMLLSLHLCFCGLLSLLSIAPCIRLRQPNSGLLQASIISCYIMYLTFSALSSRPPETIIFQGQNHTLCLPGQNKMEPQIPDASVAVFSASIMYACVLFACNEASYLAQLFGPLWIIKVYKYEFQKPSVCFCCPQTVEPEDGQGSRARPADQETPPAAQVQSQHLSYSYSGFHFAFFLASLYVMVTLTNWFSYEEAELEKTFTKGSWATFWVKVASCWACVLLYLGLLLAPLLAHHSESPPP</sequence>
<proteinExistence type="evidence at transcript level"/>
<name>SERC4_RAT</name>
<dbReference type="EMBL" id="EU220432">
    <property type="protein sequence ID" value="ABW95046.1"/>
    <property type="molecule type" value="mRNA"/>
</dbReference>
<dbReference type="EMBL" id="AC097745">
    <property type="status" value="NOT_ANNOTATED_CDS"/>
    <property type="molecule type" value="Genomic_DNA"/>
</dbReference>
<dbReference type="RefSeq" id="NP_001402855.1">
    <molecule id="A8WCG0-1"/>
    <property type="nucleotide sequence ID" value="NM_001415926.1"/>
</dbReference>
<dbReference type="RefSeq" id="XP_006234915.1">
    <property type="nucleotide sequence ID" value="XM_006234853.3"/>
</dbReference>
<dbReference type="SMR" id="A8WCG0"/>
<dbReference type="FunCoup" id="A8WCG0">
    <property type="interactions" value="18"/>
</dbReference>
<dbReference type="STRING" id="10116.ENSRNOP00000021008"/>
<dbReference type="PhosphoSitePlus" id="A8WCG0"/>
<dbReference type="PaxDb" id="10116-ENSRNOP00000021008"/>
<dbReference type="Ensembl" id="ENSRNOT00000089433.2">
    <molecule id="A8WCG0-2"/>
    <property type="protein sequence ID" value="ENSRNOP00000072425.1"/>
    <property type="gene ID" value="ENSRNOG00000015499.9"/>
</dbReference>
<dbReference type="GeneID" id="311358"/>
<dbReference type="UCSC" id="RGD:1566077">
    <molecule id="A8WCG0-1"/>
    <property type="organism name" value="rat"/>
</dbReference>
<dbReference type="AGR" id="RGD:1566077"/>
<dbReference type="RGD" id="1566077">
    <property type="gene designation" value="Serinc4"/>
</dbReference>
<dbReference type="VEuPathDB" id="HostDB:ENSRNOG00000015499"/>
<dbReference type="eggNOG" id="KOG2592">
    <property type="taxonomic scope" value="Eukaryota"/>
</dbReference>
<dbReference type="GeneTree" id="ENSGT01030000234623"/>
<dbReference type="HOGENOM" id="CLU_029574_5_2_1"/>
<dbReference type="InParanoid" id="A8WCG0"/>
<dbReference type="OMA" id="IHNFWFL"/>
<dbReference type="PhylomeDB" id="A8WCG0"/>
<dbReference type="Reactome" id="R-RNO-977347">
    <property type="pathway name" value="Serine biosynthesis"/>
</dbReference>
<dbReference type="PRO" id="PR:A8WCG0"/>
<dbReference type="Proteomes" id="UP000002494">
    <property type="component" value="Chromosome 3"/>
</dbReference>
<dbReference type="Bgee" id="ENSRNOG00000015499">
    <property type="expression patterns" value="Expressed in heart and 19 other cell types or tissues"/>
</dbReference>
<dbReference type="ExpressionAtlas" id="A8WCG0">
    <property type="expression patterns" value="baseline and differential"/>
</dbReference>
<dbReference type="GO" id="GO:0016020">
    <property type="term" value="C:membrane"/>
    <property type="evidence" value="ECO:0000318"/>
    <property type="project" value="GO_Central"/>
</dbReference>
<dbReference type="GO" id="GO:0008654">
    <property type="term" value="P:phospholipid biosynthetic process"/>
    <property type="evidence" value="ECO:0007669"/>
    <property type="project" value="UniProtKB-KW"/>
</dbReference>
<dbReference type="InterPro" id="IPR005016">
    <property type="entry name" value="TDE1/TMS"/>
</dbReference>
<dbReference type="PANTHER" id="PTHR10383">
    <property type="entry name" value="SERINE INCORPORATOR"/>
    <property type="match status" value="1"/>
</dbReference>
<dbReference type="PANTHER" id="PTHR10383:SF5">
    <property type="entry name" value="SERINE INCORPORATOR 4"/>
    <property type="match status" value="1"/>
</dbReference>
<dbReference type="Pfam" id="PF03348">
    <property type="entry name" value="Serinc"/>
    <property type="match status" value="1"/>
</dbReference>
<accession>A8WCG0</accession>
<keyword id="KW-0025">Alternative splicing</keyword>
<keyword id="KW-0444">Lipid biosynthesis</keyword>
<keyword id="KW-0443">Lipid metabolism</keyword>
<keyword id="KW-0472">Membrane</keyword>
<keyword id="KW-0594">Phospholipid biosynthesis</keyword>
<keyword id="KW-1208">Phospholipid metabolism</keyword>
<keyword id="KW-1185">Reference proteome</keyword>
<keyword id="KW-0812">Transmembrane</keyword>
<keyword id="KW-1133">Transmembrane helix</keyword>
<gene>
    <name type="primary">Serinc4</name>
</gene>
<evidence type="ECO:0000250" key="1">
    <source>
        <dbReference type="UniProtKB" id="A6NH21"/>
    </source>
</evidence>
<evidence type="ECO:0000255" key="2"/>
<evidence type="ECO:0000303" key="3">
    <source ref="1"/>
</evidence>
<evidence type="ECO:0000305" key="4"/>
<comment type="function">
    <text evidence="1">Incorporates a polar amino acid serine into membranes and facilitates the synthesis of two serine-derived lipids, phosphatidylserine and sphingolipids.</text>
</comment>
<comment type="subcellular location">
    <subcellularLocation>
        <location evidence="4">Membrane</location>
        <topology evidence="4">Multi-pass membrane protein</topology>
    </subcellularLocation>
</comment>
<comment type="alternative products">
    <event type="alternative splicing"/>
    <isoform>
        <id>A8WCG0-1</id>
        <name>1</name>
        <sequence type="displayed"/>
    </isoform>
    <isoform>
        <id>A8WCG0-2</id>
        <name>2</name>
        <sequence type="described" ref="VSP_033586"/>
    </isoform>
</comment>
<comment type="similarity">
    <text evidence="4">Belongs to the TDE1 family.</text>
</comment>